<dbReference type="EC" id="2.4.1.305"/>
<dbReference type="EMBL" id="DQ220293">
    <property type="protein sequence ID" value="ABB29913.1"/>
    <property type="molecule type" value="Genomic_DNA"/>
</dbReference>
<dbReference type="RefSeq" id="WP_074524159.1">
    <property type="nucleotide sequence ID" value="NZ_CAUYEZ010000018.1"/>
</dbReference>
<dbReference type="SMR" id="Q077R2"/>
<dbReference type="CAZy" id="GT2">
    <property type="family name" value="Glycosyltransferase Family 2"/>
</dbReference>
<dbReference type="KEGG" id="ag:ABB29913"/>
<dbReference type="BioCyc" id="MetaCyc:MONOMER-21518"/>
<dbReference type="BRENDA" id="2.4.1.305">
    <property type="organism ID" value="2026"/>
</dbReference>
<dbReference type="UniPathway" id="UPA00030"/>
<dbReference type="GO" id="GO:0005886">
    <property type="term" value="C:plasma membrane"/>
    <property type="evidence" value="ECO:0007669"/>
    <property type="project" value="UniProtKB-SubCell"/>
</dbReference>
<dbReference type="GO" id="GO:0016758">
    <property type="term" value="F:hexosyltransferase activity"/>
    <property type="evidence" value="ECO:0007669"/>
    <property type="project" value="UniProtKB-ARBA"/>
</dbReference>
<dbReference type="GO" id="GO:0009103">
    <property type="term" value="P:lipopolysaccharide biosynthetic process"/>
    <property type="evidence" value="ECO:0007669"/>
    <property type="project" value="UniProtKB-UniPathway"/>
</dbReference>
<dbReference type="CDD" id="cd00761">
    <property type="entry name" value="Glyco_tranf_GTA_type"/>
    <property type="match status" value="1"/>
</dbReference>
<dbReference type="Gene3D" id="3.90.550.10">
    <property type="entry name" value="Spore Coat Polysaccharide Biosynthesis Protein SpsA, Chain A"/>
    <property type="match status" value="1"/>
</dbReference>
<dbReference type="InterPro" id="IPR001173">
    <property type="entry name" value="Glyco_trans_2-like"/>
</dbReference>
<dbReference type="InterPro" id="IPR029044">
    <property type="entry name" value="Nucleotide-diphossugar_trans"/>
</dbReference>
<dbReference type="PANTHER" id="PTHR22916">
    <property type="entry name" value="GLYCOSYLTRANSFERASE"/>
    <property type="match status" value="1"/>
</dbReference>
<dbReference type="PANTHER" id="PTHR22916:SF3">
    <property type="entry name" value="UDP-GLCNAC:BETAGAL BETA-1,3-N-ACETYLGLUCOSAMINYLTRANSFERASE-LIKE PROTEIN 1"/>
    <property type="match status" value="1"/>
</dbReference>
<dbReference type="Pfam" id="PF00535">
    <property type="entry name" value="Glycos_transf_2"/>
    <property type="match status" value="1"/>
</dbReference>
<dbReference type="SUPFAM" id="SSF53448">
    <property type="entry name" value="Nucleotide-diphospho-sugar transferases"/>
    <property type="match status" value="1"/>
</dbReference>
<protein>
    <recommendedName>
        <fullName>UDP-Glc:alpha-D-GlcNAc-diphosphoundecaprenol beta-1,3-glucosyltransferase WfaP</fullName>
        <ecNumber>2.4.1.305</ecNumber>
    </recommendedName>
</protein>
<gene>
    <name type="primary">wfaP</name>
</gene>
<organism>
    <name type="scientific">Escherichia coli</name>
    <dbReference type="NCBI Taxonomy" id="562"/>
    <lineage>
        <taxon>Bacteria</taxon>
        <taxon>Pseudomonadati</taxon>
        <taxon>Pseudomonadota</taxon>
        <taxon>Gammaproteobacteria</taxon>
        <taxon>Enterobacterales</taxon>
        <taxon>Enterobacteriaceae</taxon>
        <taxon>Escherichia</taxon>
    </lineage>
</organism>
<evidence type="ECO:0000269" key="1">
    <source>
    </source>
</evidence>
<evidence type="ECO:0000305" key="2"/>
<keyword id="KW-0997">Cell inner membrane</keyword>
<keyword id="KW-1003">Cell membrane</keyword>
<keyword id="KW-0328">Glycosyltransferase</keyword>
<keyword id="KW-0448">Lipopolysaccharide biosynthesis</keyword>
<keyword id="KW-0460">Magnesium</keyword>
<keyword id="KW-0464">Manganese</keyword>
<keyword id="KW-0472">Membrane</keyword>
<keyword id="KW-0808">Transferase</keyword>
<reference key="1">
    <citation type="journal article" date="2006" name="Curr. Microbiol.">
        <title>Characterization of E. coli O24 and O56 O antigen gene clusters reveals a complex evolutionary history of the O24 gene cluster.</title>
        <authorList>
            <person name="Cheng J."/>
            <person name="Wang Q."/>
            <person name="Wang W."/>
            <person name="Wang Y."/>
            <person name="Wang L."/>
            <person name="Feng L."/>
        </authorList>
    </citation>
    <scope>NUCLEOTIDE SEQUENCE [GENOMIC DNA]</scope>
    <scope>GENE NAME</scope>
    <source>
        <strain>O56 / G1068</strain>
    </source>
</reference>
<reference key="2">
    <citation type="journal article" date="2008" name="J. Bacteriol.">
        <title>Characterization of two beta-1,3-glucosyltransferases from Escherichia coli serotypes O56 and O152.</title>
        <authorList>
            <person name="Brockhausen I."/>
            <person name="Hu B."/>
            <person name="Liu B."/>
            <person name="Lau K."/>
            <person name="Szarek W.A."/>
            <person name="Wang L."/>
            <person name="Feng L."/>
        </authorList>
    </citation>
    <scope>FUNCTION</scope>
    <scope>CATALYTIC ACTIVITY</scope>
    <scope>COFACTOR</scope>
    <scope>BIOPHYSICOCHEMICAL PROPERTIES</scope>
    <scope>PATHWAY</scope>
    <scope>SUBCELLULAR LOCATION</scope>
    <source>
        <strain>O56 / G1068</strain>
    </source>
</reference>
<proteinExistence type="evidence at protein level"/>
<comment type="function">
    <text evidence="1">Catalyzes the addition of Glc, the second sugar moiety of the O56-antigen repeating unit, to GlcNAc-pyrophosphate-undecaprenol.</text>
</comment>
<comment type="catalytic activity">
    <reaction evidence="1">
        <text>N-acetyl-alpha-D-glucosaminyl-di-trans,octa-cis-undecaprenyl diphosphate + UDP-alpha-D-glucose = beta-D-Glc-(1-&gt;3)-alpha-D-GlcNAc-di-trans,octa-cis-undecaprenyl diphosphate + UDP + H(+)</text>
        <dbReference type="Rhea" id="RHEA:36755"/>
        <dbReference type="ChEBI" id="CHEBI:15378"/>
        <dbReference type="ChEBI" id="CHEBI:58223"/>
        <dbReference type="ChEBI" id="CHEBI:58885"/>
        <dbReference type="ChEBI" id="CHEBI:62959"/>
        <dbReference type="ChEBI" id="CHEBI:73986"/>
        <dbReference type="EC" id="2.4.1.305"/>
    </reaction>
</comment>
<comment type="cofactor">
    <cofactor evidence="1">
        <name>Mn(2+)</name>
        <dbReference type="ChEBI" id="CHEBI:29035"/>
    </cofactor>
    <cofactor evidence="1">
        <name>Mg(2+)</name>
        <dbReference type="ChEBI" id="CHEBI:18420"/>
    </cofactor>
</comment>
<comment type="biophysicochemical properties">
    <kinetics>
        <KM evidence="1">0.5 mM for UDP-Glc</KM>
        <Vmax evidence="1">1.5 umol/h/mg enzyme toward UDP-Glc</Vmax>
    </kinetics>
    <phDependence>
        <text evidence="1">Optimum pH is 6.5.</text>
    </phDependence>
</comment>
<comment type="pathway">
    <text evidence="1">Bacterial outer membrane biogenesis; lipopolysaccharide biosynthesis.</text>
</comment>
<comment type="subcellular location">
    <subcellularLocation>
        <location evidence="1">Cell inner membrane</location>
        <topology evidence="1">Peripheral membrane protein</topology>
        <orientation evidence="1">Cytoplasmic side</orientation>
    </subcellularLocation>
</comment>
<comment type="similarity">
    <text evidence="2">Belongs to the glycosyltransferase 2 family.</text>
</comment>
<accession>Q077R2</accession>
<name>WFAP_ECOLX</name>
<feature type="chain" id="PRO_0000424177" description="UDP-Glc:alpha-D-GlcNAc-diphosphoundecaprenol beta-1,3-glucosyltransferase WfaP">
    <location>
        <begin position="1"/>
        <end position="251"/>
    </location>
</feature>
<sequence length="251" mass="28706">MELVSIIIAAYNCKDTIYATVESALSQTYKNIEIIICDDSSTDDTWDIINKIKDSRIICIKNNYCKGAAGARNCALKIAKGRYIAFLDSDDYWVTTKISNQIHFMETEKVFFSYSNYYIEKDFVITGVFSSPPEINYGAMLKYCNIACSTVILDRTGVKNISFPYIDKEDYALWLNILSKGIKARNTNLVDTYYRVHAGSVSANKFKELIRQSNVLKSIGIKAHHRIICLFYYAINGLIKHCFSYRDKRNA</sequence>